<organism>
    <name type="scientific">Rabies virus (strain Nishigahara RCEH)</name>
    <name type="common">RABV</name>
    <dbReference type="NCBI Taxonomy" id="11298"/>
    <lineage>
        <taxon>Viruses</taxon>
        <taxon>Riboviria</taxon>
        <taxon>Orthornavirae</taxon>
        <taxon>Negarnaviricota</taxon>
        <taxon>Haploviricotina</taxon>
        <taxon>Monjiviricetes</taxon>
        <taxon>Mononegavirales</taxon>
        <taxon>Rhabdoviridae</taxon>
        <taxon>Alpharhabdovirinae</taxon>
        <taxon>Lyssavirus</taxon>
        <taxon>Lyssavirus rabies</taxon>
    </lineage>
</organism>
<organismHost>
    <name type="scientific">Homo sapiens</name>
    <name type="common">Human</name>
    <dbReference type="NCBI Taxonomy" id="9606"/>
</organismHost>
<organismHost>
    <name type="scientific">Mammalia</name>
    <dbReference type="NCBI Taxonomy" id="40674"/>
</organismHost>
<gene>
    <name type="primary">L</name>
</gene>
<proteinExistence type="inferred from homology"/>
<dbReference type="EC" id="2.7.7.48" evidence="3"/>
<dbReference type="EC" id="3.6.1.-" evidence="2"/>
<dbReference type="EC" id="2.7.7.88" evidence="2"/>
<dbReference type="EC" id="2.1.1.375" evidence="2"/>
<dbReference type="EMBL" id="AB009663">
    <property type="protein sequence ID" value="BAA24087.2"/>
    <property type="molecule type" value="Genomic_RNA"/>
</dbReference>
<dbReference type="EMBL" id="AB044824">
    <property type="protein sequence ID" value="BAA96806.1"/>
    <property type="molecule type" value="Genomic_RNA"/>
</dbReference>
<dbReference type="EMBL" id="AB128149">
    <property type="protein sequence ID" value="BAD04914.1"/>
    <property type="molecule type" value="Genomic_RNA"/>
</dbReference>
<dbReference type="PIR" id="PQ0341">
    <property type="entry name" value="PQ0341"/>
</dbReference>
<dbReference type="PIR" id="PQ0363">
    <property type="entry name" value="PQ0363"/>
</dbReference>
<dbReference type="SMR" id="Q9IPJ5"/>
<dbReference type="BRENDA" id="2.7.7.88">
    <property type="organism ID" value="14818"/>
</dbReference>
<dbReference type="Proteomes" id="UP000006366">
    <property type="component" value="Genome"/>
</dbReference>
<dbReference type="Proteomes" id="UP000007309">
    <property type="component" value="Genome"/>
</dbReference>
<dbReference type="Proteomes" id="UP000007310">
    <property type="component" value="Genome"/>
</dbReference>
<dbReference type="GO" id="GO:0030430">
    <property type="term" value="C:host cell cytoplasm"/>
    <property type="evidence" value="ECO:0007669"/>
    <property type="project" value="UniProtKB-SubCell"/>
</dbReference>
<dbReference type="GO" id="GO:0044423">
    <property type="term" value="C:virion component"/>
    <property type="evidence" value="ECO:0007669"/>
    <property type="project" value="UniProtKB-KW"/>
</dbReference>
<dbReference type="GO" id="GO:0005524">
    <property type="term" value="F:ATP binding"/>
    <property type="evidence" value="ECO:0007669"/>
    <property type="project" value="UniProtKB-KW"/>
</dbReference>
<dbReference type="GO" id="GO:0003924">
    <property type="term" value="F:GTPase activity"/>
    <property type="evidence" value="ECO:0007669"/>
    <property type="project" value="RHEA"/>
</dbReference>
<dbReference type="GO" id="GO:0004482">
    <property type="term" value="F:mRNA 5'-cap (guanine-N7-)-methyltransferase activity"/>
    <property type="evidence" value="ECO:0007669"/>
    <property type="project" value="InterPro"/>
</dbReference>
<dbReference type="GO" id="GO:0003968">
    <property type="term" value="F:RNA-directed RNA polymerase activity"/>
    <property type="evidence" value="ECO:0007669"/>
    <property type="project" value="UniProtKB-KW"/>
</dbReference>
<dbReference type="GO" id="GO:0039689">
    <property type="term" value="P:negative stranded viral RNA replication"/>
    <property type="evidence" value="ECO:0000250"/>
    <property type="project" value="UniProtKB"/>
</dbReference>
<dbReference type="InterPro" id="IPR039530">
    <property type="entry name" value="L_methyltransferase_rhabdo"/>
</dbReference>
<dbReference type="InterPro" id="IPR039736">
    <property type="entry name" value="L_poly_C"/>
</dbReference>
<dbReference type="InterPro" id="IPR048398">
    <property type="entry name" value="Methyltrans_Mon_C"/>
</dbReference>
<dbReference type="InterPro" id="IPR048397">
    <property type="entry name" value="Methyltrans_Mon_CD"/>
</dbReference>
<dbReference type="InterPro" id="IPR026890">
    <property type="entry name" value="Mononeg_mRNAcap"/>
</dbReference>
<dbReference type="InterPro" id="IPR014023">
    <property type="entry name" value="Mononeg_RNA_pol_cat"/>
</dbReference>
<dbReference type="InterPro" id="IPR025786">
    <property type="entry name" value="Mononega_L_MeTrfase"/>
</dbReference>
<dbReference type="InterPro" id="IPR017234">
    <property type="entry name" value="RNA-dir_pol_rhabdovirus"/>
</dbReference>
<dbReference type="NCBIfam" id="TIGR04198">
    <property type="entry name" value="paramyx_RNAcap"/>
    <property type="match status" value="1"/>
</dbReference>
<dbReference type="Pfam" id="PF21080">
    <property type="entry name" value="Methyltrans_Mon_1st"/>
    <property type="match status" value="1"/>
</dbReference>
<dbReference type="Pfam" id="PF14314">
    <property type="entry name" value="Methyltrans_Mon_2nd"/>
    <property type="match status" value="1"/>
</dbReference>
<dbReference type="Pfam" id="PF21081">
    <property type="entry name" value="Methyltrans_Mon_3rd"/>
    <property type="match status" value="1"/>
</dbReference>
<dbReference type="Pfam" id="PF14318">
    <property type="entry name" value="Mononeg_mRNAcap"/>
    <property type="match status" value="1"/>
</dbReference>
<dbReference type="Pfam" id="PF00946">
    <property type="entry name" value="Mononeg_RNA_pol"/>
    <property type="match status" value="1"/>
</dbReference>
<dbReference type="PIRSF" id="PIRSF037546">
    <property type="entry name" value="RNA_pol_RhabdoV_sub"/>
    <property type="match status" value="1"/>
</dbReference>
<dbReference type="PROSITE" id="PS50526">
    <property type="entry name" value="RDRP_SSRNA_NEG_NONSEG"/>
    <property type="match status" value="1"/>
</dbReference>
<dbReference type="PROSITE" id="PS51590">
    <property type="entry name" value="SAM_MT_MNV_L"/>
    <property type="match status" value="1"/>
</dbReference>
<accession>Q9IPJ5</accession>
<accession>Q75T08</accession>
<accession>Q9JH63</accession>
<evidence type="ECO:0000250" key="1"/>
<evidence type="ECO:0000250" key="2">
    <source>
        <dbReference type="UniProtKB" id="P03523"/>
    </source>
</evidence>
<evidence type="ECO:0000250" key="3">
    <source>
        <dbReference type="UniProtKB" id="P28887"/>
    </source>
</evidence>
<evidence type="ECO:0000255" key="4">
    <source>
        <dbReference type="PROSITE-ProRule" id="PRU00539"/>
    </source>
</evidence>
<evidence type="ECO:0000255" key="5">
    <source>
        <dbReference type="PROSITE-ProRule" id="PRU00923"/>
    </source>
</evidence>
<evidence type="ECO:0000256" key="6">
    <source>
        <dbReference type="SAM" id="MobiDB-lite"/>
    </source>
</evidence>
<evidence type="ECO:0000305" key="7"/>
<name>L_RABVN</name>
<reference key="1">
    <citation type="journal article" date="1992" name="J. Gen. Virol.">
        <title>Molecular epidemiology of rabies virus in France: comparison with vaccine strains.</title>
        <authorList>
            <person name="Sacramento D."/>
            <person name="Badrane H."/>
            <person name="Bourhy H."/>
            <person name="Tordo N."/>
        </authorList>
    </citation>
    <scope>NUCLEOTIDE SEQUENCE [GENOMIC RNA]</scope>
</reference>
<reference key="2">
    <citation type="journal article" date="2001" name="Microbiol. Immunol.">
        <title>A comparison of complete genome sequences of the attenuated RC-HL strain of rabies virus used for production of animal vaccine in Japan, and the parental Nishigahara strain.</title>
        <authorList>
            <person name="Ito N."/>
            <person name="Kakemizu M."/>
            <person name="Ito K.A."/>
            <person name="Yamamoto A."/>
            <person name="Yoshida Y."/>
            <person name="Sugiyama M."/>
            <person name="Minamoto N."/>
        </authorList>
    </citation>
    <scope>NUCLEOTIDE SEQUENCE [GENOMIC RNA]</scope>
    <source>
        <strain>Isolate RC-HL</strain>
    </source>
</reference>
<reference key="3">
    <citation type="journal article" date="2007" name="Virus Res.">
        <title>Involvement of nucleoprotein, phosphoprotein, and matrix protein genes of rabies virus in virulence for adult mice.</title>
        <authorList>
            <person name="Shimizu K."/>
            <person name="Ito N."/>
            <person name="Mita T."/>
            <person name="Yamada K."/>
            <person name="Hosokawa-Muto J."/>
            <person name="Sugiyama M."/>
            <person name="Minamoto N."/>
        </authorList>
    </citation>
    <scope>NUCLEOTIDE SEQUENCE [GENOMIC RNA]</scope>
    <source>
        <strain>Isolate Ni-CE</strain>
        <strain>Nishigahara RCEH</strain>
    </source>
</reference>
<feature type="chain" id="PRO_0000294423" description="Large structural protein">
    <location>
        <begin position="1"/>
        <end position="2127"/>
    </location>
</feature>
<feature type="domain" description="RdRp catalytic" evidence="4">
    <location>
        <begin position="611"/>
        <end position="799"/>
    </location>
</feature>
<feature type="domain" description="Mononegavirus-type SAM-dependent 2'-O-MTase" evidence="5">
    <location>
        <begin position="1674"/>
        <end position="1871"/>
    </location>
</feature>
<feature type="region of interest" description="Disordered" evidence="6">
    <location>
        <begin position="1"/>
        <end position="27"/>
    </location>
</feature>
<feature type="region of interest" description="Interaction with P protein" evidence="1">
    <location>
        <begin position="1562"/>
        <end position="2127"/>
    </location>
</feature>
<feature type="compositionally biased region" description="Acidic residues" evidence="6">
    <location>
        <begin position="1"/>
        <end position="18"/>
    </location>
</feature>
<feature type="sequence variant" description="In strain: Isolate RC-HL.">
    <original>T</original>
    <variation>S</variation>
    <location>
        <position position="26"/>
    </location>
</feature>
<feature type="sequence variant" description="In strain: Isolate RC-HL.">
    <original>A</original>
    <variation>V</variation>
    <location>
        <position position="47"/>
    </location>
</feature>
<feature type="sequence variant" description="In strain: Isolate Ni-CE.">
    <original>C</original>
    <variation>R</variation>
    <location>
        <position position="61"/>
    </location>
</feature>
<feature type="sequence variant" description="In strain: Isolate RC-HL.">
    <original>G</original>
    <variation>D</variation>
    <location>
        <position position="86"/>
    </location>
</feature>
<feature type="sequence variant" description="In strain: Isolate Ni-CE.">
    <original>A</original>
    <variation>V</variation>
    <location>
        <position position="121"/>
    </location>
</feature>
<feature type="sequence variant" description="In strain: Isolate RC-HL.">
    <original>R</original>
    <variation>K</variation>
    <location>
        <position position="144"/>
    </location>
</feature>
<feature type="sequence variant" description="In strain: Isolate RC-HL.">
    <original>T</original>
    <variation>A</variation>
    <location>
        <position position="194"/>
    </location>
</feature>
<feature type="sequence variant" description="In strain: Isolate RC-HL.">
    <original>S</original>
    <variation>A</variation>
    <location>
        <position position="274"/>
    </location>
</feature>
<feature type="sequence variant" description="In strain: Isolate RC-HL.">
    <original>Q</original>
    <variation>H</variation>
    <location>
        <position position="933"/>
    </location>
</feature>
<feature type="sequence variant" description="In strain: Isolate RC-HL.">
    <original>Q</original>
    <variation>H</variation>
    <location>
        <position position="942"/>
    </location>
</feature>
<feature type="sequence variant" description="In strain: Isolate Ni-CE.">
    <original>R</original>
    <variation>Q</variation>
    <location>
        <position position="1079"/>
    </location>
</feature>
<feature type="sequence variant" description="In strain: Isolate RC-HL.">
    <original>F</original>
    <variation>S</variation>
    <location>
        <position position="1157"/>
    </location>
</feature>
<feature type="sequence variant" description="In strain: Isolate RC-HL.">
    <original>PL</original>
    <variation>SI</variation>
    <location>
        <begin position="1226"/>
        <end position="1227"/>
    </location>
</feature>
<feature type="sequence variant" description="In strain: Isolate RC-HL.">
    <original>SGR</original>
    <variation>NGI</variation>
    <location>
        <begin position="1372"/>
        <end position="1374"/>
    </location>
</feature>
<feature type="sequence variant" description="In strain: Isolate RC-HL.">
    <original>T</original>
    <variation>I</variation>
    <location>
        <position position="1394"/>
    </location>
</feature>
<feature type="sequence variant" description="In strain: Isolate RC-HL.">
    <original>Q</original>
    <variation>R</variation>
    <location>
        <position position="1592"/>
    </location>
</feature>
<feature type="sequence variant" description="In strain: Isolate RC-HL.">
    <original>A</original>
    <variation>V</variation>
    <location>
        <position position="1860"/>
    </location>
</feature>
<feature type="sequence variant" description="In strain: Isolate RC-HL.">
    <original>L</original>
    <variation>M</variation>
    <location>
        <position position="1990"/>
    </location>
</feature>
<feature type="sequence variant" description="In strain: Isolate RC-HL.">
    <original>L</original>
    <variation>M</variation>
    <location>
        <position position="2029"/>
    </location>
</feature>
<sequence length="2127" mass="242338">MLDPGEVYDDPIDPVESDAEPRGAPTVPNILRNSDYNLNSPLIEDPARLMLEWLKTGNRPCRMTLTDNCSRSYKVLKDYFKKVDLGSLKVGGTAAQSMISLWLYGAHSESNRSRRCITDLAHFYSKSSPIEKLLNCTLGNRGLRIPPEGVLSCLEKVDYDKAFGRYLANTYSSYLFFHVIILYMNALDRDEEKTILALWKDLTSVDIGKDLVKFKDQIWGLLIVTKDFVYSQSSNCLFDRNYTLMLKDLFLSRFNSLMILLSPPEPLYSDDLISQLCQLYIAGDQVLSMCGNSGYEVIKILEPYVVNSLVRRAEKFRPLIHSLGDFPVFIKDKVSQLEGTFGPSAKRFFKVLDQFDNIHDLVFVYGCYRHWGHPYIDYRKGLSKLYDQVHMKKVIDKSYQECLASDLARRILRWGFDKYSKWYLDSRFLAQDHPLTPYVKTQTWPPRHIADLVGDTWHKLPITQIFEIPESMDPSEILDDKSHSLTRTRLASWLSENRGGPVPSEKVIITALSKPPINPREFLKSIDLGGLPDEDLIIGLKPKERELKIEGRFFALMSWNLRLYFVITEKLLANYILPLFDALTMTDNLNKVFKKLIDRVTGQGLLDYSRVTYAFHLDYEKWNNHQRLESTEDVFSVLDQVFGLKRVFSRTHEFFQKSWIYYSDRSDLIGLWEDQIYCLDISNGPTCWNGQDGGLEGLRQKGWSLVSLLMIDRESQTRNTRTKILAQGDNQVLCPTYMLSPGLSLEGLLYELESISRNALSIYRAIEEGASKLGLIIKKEETMCSYDFLIYGKTPLFRGNILVPESKRWARVSCISNDQIVNLANIMSTVSTNALTVAQHSQSLIKPMRDFLLMSVQAVFHYLLFSPILKGRVYKILSAEGESFLLAMSRIIYLDPSLGGVSGMSLGRFHIRQFSDPVSEGLSFWREIWLSSQESWIHALCQEAGNPDLGERTLESFTRLLEDPTTLNIKGGASPTILLKDAIRKALYDEVDKVENSEFREAILLSKTHRDNFILFLKSVEPLFPRFLSELFSSSFLGIPESIIGLIQNSRTIRRQFRKSLSRTLEESFYNSEIHGINRMTQTPQRVGRVWPCSSERADLLREISWGRKVVGTTVPHPSEMLGLLPKSSISCTCGATGGGNPRVSVSVLPSFDQSFFSRGPLKGYLGSSTSMSTQLFHAWEKVTNVHVVKRALSLKESINWFITRNSNLAQTLIRNIISLTGPDFPLEEAPVFKRTGSALHRFKSARYSEGGYSSVCPNLLSHISVSTDTMSDLTQDGKNYDFMFQPLMLYAQTWTSELVQRDTRLRDSTFHWHLRCNRCVRPIDDITLETSQIFEFPDVSKRISRMVSGAVPHFRKLPDIRLRPGDFESLSGREKSRHIGSAQGLLYSILVATHDSGYNDGTIFPVNIYGKVSPRDYLRGLARGVLIGSSICFLTRMTNININRPLELISGVISYILLRLDNHPSLYVMLREPSLRGEIFSIPQKIPAAYPTTMKEGNRSILCYLQHVLRYEREVITASPENDWLWIFSDFRSAKMTYLTLITYQSHLLLQRVERNLSKGMRANLQQLSSLMRQVLGGHGEDTLESDDDIQRLLKDSLRRTRWVDQEVRHAAKTMTGDYSPNKKVSRKAGCSEWVCSAQQVAVSTSANPAPVSELDIRALSKRFQNPLISGLRVVQWATGAHYKLKPILDDLKVFPSLCLVVGDGSGGISRAVLNMFPDAKLVFNSLLEVNDLMASGTHPLPPSAIMSGGDDIVSRVIDFDSIWEKPSDLRNLTTWGYFQSVQKQVNMSFDLIICDAEVTDIASINQITLLMSDFALSIDGPLYLVFKTYGTMLVNPDYKAIQHLSRAFPSVTGFVTQATSSFSSELYLRFSKRGKFFRDAEYLTSSTLREMSLVLFNCSSPKSEMQRARSLNYQDLVRGFPEEIISNPYNEMIITLIDNDVESFLVHKMVDDLELQRGTLSKVAIIIAIVIVFSNRVFNISKPLADPLFYPPSDPKILRHFNICCSTLMYLSTALGDVPSFTRLHDLYNRPITYYFRKQVIRGNIYLSWSWSGDTLVFKRVACNSSLSLSSHWIRLIYKIVKTTRLVGNIEDLSREVERHLHGYNRWITLKDIRSRSSLLDYSCL</sequence>
<keyword id="KW-0067">ATP-binding</keyword>
<keyword id="KW-1035">Host cytoplasm</keyword>
<keyword id="KW-0378">Hydrolase</keyword>
<keyword id="KW-0489">Methyltransferase</keyword>
<keyword id="KW-0506">mRNA capping</keyword>
<keyword id="KW-0507">mRNA processing</keyword>
<keyword id="KW-0511">Multifunctional enzyme</keyword>
<keyword id="KW-0547">Nucleotide-binding</keyword>
<keyword id="KW-0548">Nucleotidyltransferase</keyword>
<keyword id="KW-0696">RNA-directed RNA polymerase</keyword>
<keyword id="KW-0949">S-adenosyl-L-methionine</keyword>
<keyword id="KW-0808">Transferase</keyword>
<keyword id="KW-0693">Viral RNA replication</keyword>
<keyword id="KW-0946">Virion</keyword>
<protein>
    <recommendedName>
        <fullName>Large structural protein</fullName>
        <shortName>Protein L</shortName>
    </recommendedName>
    <alternativeName>
        <fullName>Replicase</fullName>
    </alternativeName>
    <alternativeName>
        <fullName>Transcriptase</fullName>
    </alternativeName>
    <domain>
        <recommendedName>
            <fullName>RNA-directed RNA polymerase</fullName>
            <ecNumber evidence="3">2.7.7.48</ecNumber>
        </recommendedName>
    </domain>
    <domain>
        <recommendedName>
            <fullName evidence="2">GTP phosphohydrolase</fullName>
            <ecNumber evidence="2">3.6.1.-</ecNumber>
        </recommendedName>
    </domain>
    <domain>
        <recommendedName>
            <fullName evidence="7">GDP polyribonucleotidyltransferase</fullName>
            <ecNumber evidence="2">2.7.7.88</ecNumber>
        </recommendedName>
        <alternativeName>
            <fullName evidence="7">PRNTase</fullName>
        </alternativeName>
    </domain>
    <domain>
        <recommendedName>
            <fullName evidence="7">mRNA cap methyltransferase</fullName>
            <ecNumber evidence="2">2.1.1.375</ecNumber>
        </recommendedName>
        <alternativeName>
            <fullName evidence="2">mRNA (guanine-N(7)-)-methyltransferase</fullName>
            <shortName evidence="2">G-N7-MTase</shortName>
        </alternativeName>
        <alternativeName>
            <fullName evidence="2">mRNA (nucleoside-2'-O-)-methyltransferase</fullName>
            <shortName evidence="2">N1-2'-O-MTase</shortName>
        </alternativeName>
    </domain>
</protein>
<comment type="function">
    <text evidence="2">RNA-directed RNA polymerase that catalyzes the transcription of viral mRNAs, their capping and polyadenylation. The template is composed of the viral RNA tightly encapsidated by the nucleoprotein (N). The viral polymerase binds to the genomic RNA at the 3' leader promoter, and transcribes subsequently all viral mRNAs with a decreasing efficiency. The first gene is the most transcribed, and the last the least transcribed. The viral phosphoprotein acts as a processivity factor. Capping is concomitant with initiation of mRNA transcription. Indeed, a GDP polyribonucleotidyl transferase (PRNTase) adds the cap structure when the nascent RNA chain length has reached few nucleotides. Ribose 2'-O methylation of viral mRNA cap precedes and facilitates subsequent guanine-N-7 methylation, both activities being carried by the viral polymerase. Polyadenylation of mRNAs occur by a stuttering mechanism at a slipery stop site present at the end viral genes. After finishing transcription of a mRNA, the polymerase can resume transcription of the downstream gene.</text>
</comment>
<comment type="function">
    <text evidence="2">RNA-directed RNA polymerase that catalyzes the replication of viral genomic RNA. The template is composed of the viral RNA tightly encapsidated by the nucleoprotein (N). The replicase mode is dependent on intracellular N protein concentration. In this mode, the polymerase replicates the whole viral genome without recognizing transcriptional signals, and the replicated genome is not caped or polyadenylated.</text>
</comment>
<comment type="catalytic activity">
    <reaction evidence="4">
        <text>RNA(n) + a ribonucleoside 5'-triphosphate = RNA(n+1) + diphosphate</text>
        <dbReference type="Rhea" id="RHEA:21248"/>
        <dbReference type="Rhea" id="RHEA-COMP:14527"/>
        <dbReference type="Rhea" id="RHEA-COMP:17342"/>
        <dbReference type="ChEBI" id="CHEBI:33019"/>
        <dbReference type="ChEBI" id="CHEBI:61557"/>
        <dbReference type="ChEBI" id="CHEBI:140395"/>
        <dbReference type="EC" id="2.7.7.48"/>
    </reaction>
</comment>
<comment type="catalytic activity">
    <reaction evidence="2">
        <text>a 5'-end (5'-triphosphoguanosine)-adenylyl-adenylyl-cytidylyl-adenosine in mRNA + 2 S-adenosyl-L-methionine = a 5'-end (N(7)-methyl 5'-triphosphoguanosine)-(2'-O-methyladenylyl)-adenylyl-cytidylyl-adenosine in mRNA + 2 S-adenosyl-L-homocysteine + H(+)</text>
        <dbReference type="Rhea" id="RHEA:65376"/>
        <dbReference type="Rhea" id="RHEA-COMP:16797"/>
        <dbReference type="Rhea" id="RHEA-COMP:16798"/>
        <dbReference type="ChEBI" id="CHEBI:15378"/>
        <dbReference type="ChEBI" id="CHEBI:57856"/>
        <dbReference type="ChEBI" id="CHEBI:59789"/>
        <dbReference type="ChEBI" id="CHEBI:156483"/>
        <dbReference type="ChEBI" id="CHEBI:156484"/>
        <dbReference type="EC" id="2.1.1.375"/>
    </reaction>
</comment>
<comment type="catalytic activity">
    <reaction evidence="2">
        <text>a 5'-end (5'-triphosphoguanosine)-adenylyl-adenylyl-cytidylyl-adenosine in mRNA + S-adenosyl-L-methionine = a 5'-end (5'-triphosphoguanosine)-(2'-O-methyladenylyl)-adenylyl-cytidylyl-adenosine in mRNA + S-adenosyl-L-homocysteine + H(+)</text>
        <dbReference type="Rhea" id="RHEA:65380"/>
        <dbReference type="Rhea" id="RHEA-COMP:16797"/>
        <dbReference type="Rhea" id="RHEA-COMP:16801"/>
        <dbReference type="ChEBI" id="CHEBI:15378"/>
        <dbReference type="ChEBI" id="CHEBI:57856"/>
        <dbReference type="ChEBI" id="CHEBI:59789"/>
        <dbReference type="ChEBI" id="CHEBI:156482"/>
        <dbReference type="ChEBI" id="CHEBI:156484"/>
    </reaction>
</comment>
<comment type="catalytic activity">
    <reaction evidence="3">
        <text>a 5'-end triphospho-adenylyl-adenylyl-cytidylyl-adenosine in mRNA + GDP + H(+) = a 5'-end (5'-triphosphoguanosine)-adenylyl-adenylyl-cytidylyl-adenosine in mRNA + diphosphate</text>
        <dbReference type="Rhea" id="RHEA:65436"/>
        <dbReference type="Rhea" id="RHEA-COMP:16797"/>
        <dbReference type="Rhea" id="RHEA-COMP:16799"/>
        <dbReference type="ChEBI" id="CHEBI:15378"/>
        <dbReference type="ChEBI" id="CHEBI:33019"/>
        <dbReference type="ChEBI" id="CHEBI:58189"/>
        <dbReference type="ChEBI" id="CHEBI:156484"/>
        <dbReference type="ChEBI" id="CHEBI:156503"/>
        <dbReference type="EC" id="2.7.7.88"/>
    </reaction>
</comment>
<comment type="catalytic activity">
    <reaction evidence="2">
        <text>a 5'-end (5'-triphosphoguanosine)-(2'-O-methyladenylyl)-adenylyl-cytidylyl-adenosine in mRNA + S-adenosyl-L-methionine = a 5'-end (N(7)-methyl 5'-triphosphoguanosine)-(2'-O-methyladenylyl)-adenylyl-cytidylyl-adenosine in mRNA + S-adenosyl-L-homocysteine</text>
        <dbReference type="Rhea" id="RHEA:65440"/>
        <dbReference type="Rhea" id="RHEA-COMP:16798"/>
        <dbReference type="Rhea" id="RHEA-COMP:16801"/>
        <dbReference type="ChEBI" id="CHEBI:57856"/>
        <dbReference type="ChEBI" id="CHEBI:59789"/>
        <dbReference type="ChEBI" id="CHEBI:156482"/>
        <dbReference type="ChEBI" id="CHEBI:156483"/>
    </reaction>
</comment>
<comment type="catalytic activity">
    <reaction evidence="3">
        <text>GTP + H2O = GDP + phosphate + H(+)</text>
        <dbReference type="Rhea" id="RHEA:19669"/>
        <dbReference type="ChEBI" id="CHEBI:15377"/>
        <dbReference type="ChEBI" id="CHEBI:15378"/>
        <dbReference type="ChEBI" id="CHEBI:37565"/>
        <dbReference type="ChEBI" id="CHEBI:43474"/>
        <dbReference type="ChEBI" id="CHEBI:58189"/>
    </reaction>
</comment>
<comment type="subunit">
    <text evidence="2">May form homodimer. Interacts with the P protein.</text>
</comment>
<comment type="subcellular location">
    <subcellularLocation>
        <location evidence="2">Virion</location>
    </subcellularLocation>
    <subcellularLocation>
        <location evidence="2">Host cytoplasm</location>
    </subcellularLocation>
    <text evidence="2">L and P are packaged asymmetrically towards the blunt end of the virus.</text>
</comment>
<comment type="similarity">
    <text evidence="7">Belongs to the rhabdoviruses protein L family.</text>
</comment>